<evidence type="ECO:0000255" key="1">
    <source>
        <dbReference type="PROSITE-ProRule" id="PRU00227"/>
    </source>
</evidence>
<evidence type="ECO:0000256" key="2">
    <source>
        <dbReference type="SAM" id="MobiDB-lite"/>
    </source>
</evidence>
<evidence type="ECO:0000269" key="3">
    <source>
    </source>
</evidence>
<evidence type="ECO:0000269" key="4">
    <source>
    </source>
</evidence>
<evidence type="ECO:0000303" key="5">
    <source>
    </source>
</evidence>
<gene>
    <name evidence="5" type="primary">pynRA</name>
    <name type="ORF">An11g00290</name>
</gene>
<comment type="function">
    <text evidence="3 4">Transcription factor that regulates the expression of the gene cluster that mediates the biosynthesis of pyranonigrins, a family of antioxidative compounds.</text>
</comment>
<comment type="subcellular location">
    <subcellularLocation>
        <location evidence="1">Nucleus</location>
    </subcellularLocation>
</comment>
<protein>
    <recommendedName>
        <fullName evidence="5">Transcription factor pynR</fullName>
    </recommendedName>
    <alternativeName>
        <fullName evidence="5">Pyranonigrins biosynthesis cluster protein R</fullName>
    </alternativeName>
</protein>
<reference key="1">
    <citation type="journal article" date="2007" name="Nat. Biotechnol.">
        <title>Genome sequencing and analysis of the versatile cell factory Aspergillus niger CBS 513.88.</title>
        <authorList>
            <person name="Pel H.J."/>
            <person name="de Winde J.H."/>
            <person name="Archer D.B."/>
            <person name="Dyer P.S."/>
            <person name="Hofmann G."/>
            <person name="Schaap P.J."/>
            <person name="Turner G."/>
            <person name="de Vries R.P."/>
            <person name="Albang R."/>
            <person name="Albermann K."/>
            <person name="Andersen M.R."/>
            <person name="Bendtsen J.D."/>
            <person name="Benen J.A.E."/>
            <person name="van den Berg M."/>
            <person name="Breestraat S."/>
            <person name="Caddick M.X."/>
            <person name="Contreras R."/>
            <person name="Cornell M."/>
            <person name="Coutinho P.M."/>
            <person name="Danchin E.G.J."/>
            <person name="Debets A.J.M."/>
            <person name="Dekker P."/>
            <person name="van Dijck P.W.M."/>
            <person name="van Dijk A."/>
            <person name="Dijkhuizen L."/>
            <person name="Driessen A.J.M."/>
            <person name="d'Enfert C."/>
            <person name="Geysens S."/>
            <person name="Goosen C."/>
            <person name="Groot G.S.P."/>
            <person name="de Groot P.W.J."/>
            <person name="Guillemette T."/>
            <person name="Henrissat B."/>
            <person name="Herweijer M."/>
            <person name="van den Hombergh J.P.T.W."/>
            <person name="van den Hondel C.A.M.J.J."/>
            <person name="van der Heijden R.T.J.M."/>
            <person name="van der Kaaij R.M."/>
            <person name="Klis F.M."/>
            <person name="Kools H.J."/>
            <person name="Kubicek C.P."/>
            <person name="van Kuyk P.A."/>
            <person name="Lauber J."/>
            <person name="Lu X."/>
            <person name="van der Maarel M.J.E.C."/>
            <person name="Meulenberg R."/>
            <person name="Menke H."/>
            <person name="Mortimer M.A."/>
            <person name="Nielsen J."/>
            <person name="Oliver S.G."/>
            <person name="Olsthoorn M."/>
            <person name="Pal K."/>
            <person name="van Peij N.N.M.E."/>
            <person name="Ram A.F.J."/>
            <person name="Rinas U."/>
            <person name="Roubos J.A."/>
            <person name="Sagt C.M.J."/>
            <person name="Schmoll M."/>
            <person name="Sun J."/>
            <person name="Ussery D."/>
            <person name="Varga J."/>
            <person name="Vervecken W."/>
            <person name="van de Vondervoort P.J.J."/>
            <person name="Wedler H."/>
            <person name="Woesten H.A.B."/>
            <person name="Zeng A.-P."/>
            <person name="van Ooyen A.J.J."/>
            <person name="Visser J."/>
            <person name="Stam H."/>
        </authorList>
    </citation>
    <scope>NUCLEOTIDE SEQUENCE [LARGE SCALE GENOMIC DNA]</scope>
    <source>
        <strain>ATCC MYA-4892 / CBS 513.88 / FGSC A1513</strain>
    </source>
</reference>
<reference key="2">
    <citation type="journal article" date="2013" name="ChemBioChem">
        <title>Pyranonigrin E: a PKS-NRPS hybrid metabolite from Aspergillus niger identified by genome mining.</title>
        <authorList>
            <person name="Awakawa T."/>
            <person name="Yang X.L."/>
            <person name="Wakimoto T."/>
            <person name="Abe I."/>
        </authorList>
    </citation>
    <scope>FUNCTION</scope>
</reference>
<reference key="3">
    <citation type="journal article" date="2015" name="Org. Lett.">
        <title>Elucidation of pyranonigrin biosynthetic pathway reveals a mode of tetramic acid, fused gamma-pyrone, and exo-methylene formation.</title>
        <authorList>
            <person name="Yamamoto T."/>
            <person name="Tsunematsu Y."/>
            <person name="Noguchi H."/>
            <person name="Hotta K."/>
            <person name="Watanabe K."/>
        </authorList>
    </citation>
    <scope>FUNCTION</scope>
</reference>
<accession>A5ABG4</accession>
<sequence>MAKKAELRRSCTFCRTRKIACSGERICNACRSRSIECVYDLEIAKGRPRLNKTTSTRASISAGPAGPSPITLEDGEPGDGGHSITSAVNPSITPLTGVMAELEVMFRENFGEDPMAAPSNQFQDRVARFNRNLAAGRASQGPSTPAGSLTYPGFLALLMQDLAETVTGKFGDLGCHPFFGPGERFYRACMLQDTTKTMFDTACLPSPSTSTPSGGEADILADYNSHLITQHLEVWMSNHPLSIIISKSLLLRDLRSQTANRVLLAVMLADAHHFADNSAKGDRLLQWAVSQLSNIPAGQEDLTTAQITLLLGWFHVCRGHSRRALCYVGYAGRITTKLASQLHESPLTGQTHINGIDRGAVEAEMIHHMYWVMLALTVWSFIQMDMPLADLLPAQLLQVLPARTTPDSTLLQLDRATDNLSTLKPQLSSLQSVWLLSHVTVLSAHLYALYPQHLRSPPEPQPWQDLMLHRLNRLLRQGRSLTQICSDSRNALLDIIVVLQKESAHGRGEPTLLALYLAVSIHLLFPRDETGHHVHNSQTFVLSDTLFQQLIASIQDLKQLFPAISSVARHDSSQPASTGSAGLHFYLLALDALGRALMYVLTVWDRVTAVEQRVWQDRLRGLLDGGLAMHDLFEYDALLQDHRWRSVKKHLKTACKGIKGVLSGSRDQGSRSSSSSVSSLDLSFALPSRPTPAMGIPTSEEGRSEMMFPTMPSASGIPSSISSSISHTSREVGLSWPGDGQILPTQEQGPRESSHPAASDLSDFDLAPFVSLGSIDSMQNGDERSRIMQQFSPNPMSLPSFWHDPQFSPAHHLVGTMPPPSLISLADLGMGERGQKRSSEKLGGLSEGDTPGTSADGGTKRRMKGMSN</sequence>
<name>PYNR_ASPNC</name>
<feature type="chain" id="PRO_0000450062" description="Transcription factor pynR">
    <location>
        <begin position="1"/>
        <end position="868"/>
    </location>
</feature>
<feature type="DNA-binding region" description="Zn(2)-C6 fungal-type" evidence="1">
    <location>
        <begin position="11"/>
        <end position="37"/>
    </location>
</feature>
<feature type="region of interest" description="Disordered" evidence="2">
    <location>
        <begin position="51"/>
        <end position="88"/>
    </location>
</feature>
<feature type="region of interest" description="Disordered" evidence="2">
    <location>
        <begin position="662"/>
        <end position="683"/>
    </location>
</feature>
<feature type="region of interest" description="Disordered" evidence="2">
    <location>
        <begin position="715"/>
        <end position="761"/>
    </location>
</feature>
<feature type="region of interest" description="Disordered" evidence="2">
    <location>
        <begin position="829"/>
        <end position="868"/>
    </location>
</feature>
<feature type="compositionally biased region" description="Low complexity" evidence="2">
    <location>
        <begin position="663"/>
        <end position="683"/>
    </location>
</feature>
<feature type="compositionally biased region" description="Low complexity" evidence="2">
    <location>
        <begin position="715"/>
        <end position="727"/>
    </location>
</feature>
<proteinExistence type="inferred from homology"/>
<organism>
    <name type="scientific">Aspergillus niger (strain ATCC MYA-4892 / CBS 513.88 / FGSC A1513)</name>
    <dbReference type="NCBI Taxonomy" id="425011"/>
    <lineage>
        <taxon>Eukaryota</taxon>
        <taxon>Fungi</taxon>
        <taxon>Dikarya</taxon>
        <taxon>Ascomycota</taxon>
        <taxon>Pezizomycotina</taxon>
        <taxon>Eurotiomycetes</taxon>
        <taxon>Eurotiomycetidae</taxon>
        <taxon>Eurotiales</taxon>
        <taxon>Aspergillaceae</taxon>
        <taxon>Aspergillus</taxon>
        <taxon>Aspergillus subgen. Circumdati</taxon>
    </lineage>
</organism>
<dbReference type="EMBL" id="AM270218">
    <property type="protein sequence ID" value="CAK48262.1"/>
    <property type="molecule type" value="Genomic_DNA"/>
</dbReference>
<dbReference type="RefSeq" id="XP_001394033.1">
    <property type="nucleotide sequence ID" value="XM_001393996.1"/>
</dbReference>
<dbReference type="EnsemblFungi" id="CAK48262">
    <property type="protein sequence ID" value="CAK48262"/>
    <property type="gene ID" value="An11g00290"/>
</dbReference>
<dbReference type="GeneID" id="4984240"/>
<dbReference type="KEGG" id="ang:An11g00290"/>
<dbReference type="VEuPathDB" id="FungiDB:An11g00290"/>
<dbReference type="HOGENOM" id="CLU_340661_0_0_1"/>
<dbReference type="Proteomes" id="UP000006706">
    <property type="component" value="Chromosome 7R"/>
</dbReference>
<dbReference type="GO" id="GO:0005634">
    <property type="term" value="C:nucleus"/>
    <property type="evidence" value="ECO:0007669"/>
    <property type="project" value="UniProtKB-SubCell"/>
</dbReference>
<dbReference type="GO" id="GO:0003677">
    <property type="term" value="F:DNA binding"/>
    <property type="evidence" value="ECO:0007669"/>
    <property type="project" value="UniProtKB-KW"/>
</dbReference>
<dbReference type="GO" id="GO:0000981">
    <property type="term" value="F:DNA-binding transcription factor activity, RNA polymerase II-specific"/>
    <property type="evidence" value="ECO:0007669"/>
    <property type="project" value="InterPro"/>
</dbReference>
<dbReference type="GO" id="GO:0008270">
    <property type="term" value="F:zinc ion binding"/>
    <property type="evidence" value="ECO:0007669"/>
    <property type="project" value="InterPro"/>
</dbReference>
<dbReference type="GO" id="GO:0009893">
    <property type="term" value="P:positive regulation of metabolic process"/>
    <property type="evidence" value="ECO:0007669"/>
    <property type="project" value="UniProtKB-ARBA"/>
</dbReference>
<dbReference type="GO" id="GO:0019748">
    <property type="term" value="P:secondary metabolic process"/>
    <property type="evidence" value="ECO:0000317"/>
    <property type="project" value="AspGD"/>
</dbReference>
<dbReference type="CDD" id="cd12148">
    <property type="entry name" value="fungal_TF_MHR"/>
    <property type="match status" value="1"/>
</dbReference>
<dbReference type="CDD" id="cd00067">
    <property type="entry name" value="GAL4"/>
    <property type="match status" value="1"/>
</dbReference>
<dbReference type="Gene3D" id="4.10.240.10">
    <property type="entry name" value="Zn(2)-C6 fungal-type DNA-binding domain"/>
    <property type="match status" value="1"/>
</dbReference>
<dbReference type="InterPro" id="IPR050815">
    <property type="entry name" value="TF_fung"/>
</dbReference>
<dbReference type="InterPro" id="IPR036864">
    <property type="entry name" value="Zn2-C6_fun-type_DNA-bd_sf"/>
</dbReference>
<dbReference type="InterPro" id="IPR001138">
    <property type="entry name" value="Zn2Cys6_DnaBD"/>
</dbReference>
<dbReference type="PANTHER" id="PTHR47338:SF5">
    <property type="entry name" value="ZN(II)2CYS6 TRANSCRIPTION FACTOR (EUROFUNG)"/>
    <property type="match status" value="1"/>
</dbReference>
<dbReference type="PANTHER" id="PTHR47338">
    <property type="entry name" value="ZN(II)2CYS6 TRANSCRIPTION FACTOR (EUROFUNG)-RELATED"/>
    <property type="match status" value="1"/>
</dbReference>
<dbReference type="Pfam" id="PF00172">
    <property type="entry name" value="Zn_clus"/>
    <property type="match status" value="1"/>
</dbReference>
<dbReference type="SMART" id="SM00066">
    <property type="entry name" value="GAL4"/>
    <property type="match status" value="1"/>
</dbReference>
<dbReference type="SUPFAM" id="SSF57701">
    <property type="entry name" value="Zn2/Cys6 DNA-binding domain"/>
    <property type="match status" value="1"/>
</dbReference>
<dbReference type="PROSITE" id="PS00463">
    <property type="entry name" value="ZN2_CY6_FUNGAL_1"/>
    <property type="match status" value="1"/>
</dbReference>
<dbReference type="PROSITE" id="PS50048">
    <property type="entry name" value="ZN2_CY6_FUNGAL_2"/>
    <property type="match status" value="1"/>
</dbReference>
<keyword id="KW-0238">DNA-binding</keyword>
<keyword id="KW-0479">Metal-binding</keyword>
<keyword id="KW-0539">Nucleus</keyword>
<keyword id="KW-1185">Reference proteome</keyword>
<keyword id="KW-0804">Transcription</keyword>
<keyword id="KW-0805">Transcription regulation</keyword>
<keyword id="KW-0862">Zinc</keyword>